<dbReference type="EC" id="3.5.4.16" evidence="1"/>
<dbReference type="EMBL" id="CP000571">
    <property type="protein sequence ID" value="ABN85657.1"/>
    <property type="molecule type" value="Genomic_DNA"/>
</dbReference>
<dbReference type="RefSeq" id="WP_004195713.1">
    <property type="nucleotide sequence ID" value="NC_009075.1"/>
</dbReference>
<dbReference type="SMR" id="A3NMF5"/>
<dbReference type="GeneID" id="93063968"/>
<dbReference type="KEGG" id="bpd:BURPS668_A2533"/>
<dbReference type="HOGENOM" id="CLU_062816_1_1_4"/>
<dbReference type="UniPathway" id="UPA00848">
    <property type="reaction ID" value="UER00151"/>
</dbReference>
<dbReference type="GO" id="GO:0003934">
    <property type="term" value="F:GTP cyclohydrolase I activity"/>
    <property type="evidence" value="ECO:0007669"/>
    <property type="project" value="UniProtKB-UniRule"/>
</dbReference>
<dbReference type="GO" id="GO:0046654">
    <property type="term" value="P:tetrahydrofolate biosynthetic process"/>
    <property type="evidence" value="ECO:0007669"/>
    <property type="project" value="UniProtKB-UniRule"/>
</dbReference>
<dbReference type="Gene3D" id="3.10.270.10">
    <property type="entry name" value="Urate Oxidase"/>
    <property type="match status" value="1"/>
</dbReference>
<dbReference type="HAMAP" id="MF_01527_B">
    <property type="entry name" value="GTP_cyclohydrol_B"/>
    <property type="match status" value="1"/>
</dbReference>
<dbReference type="InterPro" id="IPR022838">
    <property type="entry name" value="GTP_cyclohydrolase_FolE2"/>
</dbReference>
<dbReference type="InterPro" id="IPR003801">
    <property type="entry name" value="GTP_cyclohydrolase_FolE2/MptA"/>
</dbReference>
<dbReference type="NCBIfam" id="NF010200">
    <property type="entry name" value="PRK13674.1-1"/>
    <property type="match status" value="1"/>
</dbReference>
<dbReference type="PANTHER" id="PTHR36445">
    <property type="entry name" value="GTP CYCLOHYDROLASE MPTA"/>
    <property type="match status" value="1"/>
</dbReference>
<dbReference type="PANTHER" id="PTHR36445:SF1">
    <property type="entry name" value="GTP CYCLOHYDROLASE MPTA"/>
    <property type="match status" value="1"/>
</dbReference>
<dbReference type="Pfam" id="PF02649">
    <property type="entry name" value="GCHY-1"/>
    <property type="match status" value="1"/>
</dbReference>
<sequence>MNLMNPEFAMPDVQSTVDTRQMPIQRVGVRAVRHPLTVRTAEGETQATVGTWNLDVHLPADQKGTHMSRFVALLEERGGPLTADAFRTMLATMLEKLEARAGRIEVSFPYFVNKTAPVSGVRSLLDYEVTLTGDVRDGLTRVFAKVLVPVTSLCPCSKKISQYGAHNQRSHVTIDAELAADVPVEDLIRIAEEEASCELWGLLKRPDEKFVTERAYENPKFVEDLVRDVARRLDADERIVAYVLEAENFESIHNHSAYALIERDKRRGA</sequence>
<keyword id="KW-0378">Hydrolase</keyword>
<feature type="chain" id="PRO_1000068662" description="GTP cyclohydrolase FolE2">
    <location>
        <begin position="1"/>
        <end position="269"/>
    </location>
</feature>
<feature type="site" description="May be catalytically important" evidence="1">
    <location>
        <position position="154"/>
    </location>
</feature>
<evidence type="ECO:0000255" key="1">
    <source>
        <dbReference type="HAMAP-Rule" id="MF_01527"/>
    </source>
</evidence>
<protein>
    <recommendedName>
        <fullName evidence="1">GTP cyclohydrolase FolE2</fullName>
        <ecNumber evidence="1">3.5.4.16</ecNumber>
    </recommendedName>
</protein>
<reference key="1">
    <citation type="journal article" date="2010" name="Genome Biol. Evol.">
        <title>Continuing evolution of Burkholderia mallei through genome reduction and large-scale rearrangements.</title>
        <authorList>
            <person name="Losada L."/>
            <person name="Ronning C.M."/>
            <person name="DeShazer D."/>
            <person name="Woods D."/>
            <person name="Fedorova N."/>
            <person name="Kim H.S."/>
            <person name="Shabalina S.A."/>
            <person name="Pearson T.R."/>
            <person name="Brinkac L."/>
            <person name="Tan P."/>
            <person name="Nandi T."/>
            <person name="Crabtree J."/>
            <person name="Badger J."/>
            <person name="Beckstrom-Sternberg S."/>
            <person name="Saqib M."/>
            <person name="Schutzer S.E."/>
            <person name="Keim P."/>
            <person name="Nierman W.C."/>
        </authorList>
    </citation>
    <scope>NUCLEOTIDE SEQUENCE [LARGE SCALE GENOMIC DNA]</scope>
    <source>
        <strain>668</strain>
    </source>
</reference>
<comment type="function">
    <text evidence="1">Converts GTP to 7,8-dihydroneopterin triphosphate.</text>
</comment>
<comment type="catalytic activity">
    <reaction evidence="1">
        <text>GTP + H2O = 7,8-dihydroneopterin 3'-triphosphate + formate + H(+)</text>
        <dbReference type="Rhea" id="RHEA:17473"/>
        <dbReference type="ChEBI" id="CHEBI:15377"/>
        <dbReference type="ChEBI" id="CHEBI:15378"/>
        <dbReference type="ChEBI" id="CHEBI:15740"/>
        <dbReference type="ChEBI" id="CHEBI:37565"/>
        <dbReference type="ChEBI" id="CHEBI:58462"/>
        <dbReference type="EC" id="3.5.4.16"/>
    </reaction>
</comment>
<comment type="pathway">
    <text evidence="1">Cofactor biosynthesis; 7,8-dihydroneopterin triphosphate biosynthesis; 7,8-dihydroneopterin triphosphate from GTP: step 1/1.</text>
</comment>
<comment type="similarity">
    <text evidence="1">Belongs to the GTP cyclohydrolase IV family.</text>
</comment>
<proteinExistence type="inferred from homology"/>
<accession>A3NMF5</accession>
<name>GCH4_BURP6</name>
<organism>
    <name type="scientific">Burkholderia pseudomallei (strain 668)</name>
    <dbReference type="NCBI Taxonomy" id="320373"/>
    <lineage>
        <taxon>Bacteria</taxon>
        <taxon>Pseudomonadati</taxon>
        <taxon>Pseudomonadota</taxon>
        <taxon>Betaproteobacteria</taxon>
        <taxon>Burkholderiales</taxon>
        <taxon>Burkholderiaceae</taxon>
        <taxon>Burkholderia</taxon>
        <taxon>pseudomallei group</taxon>
    </lineage>
</organism>
<gene>
    <name evidence="1" type="primary">folE2</name>
    <name type="ordered locus">BURPS668_A2533</name>
</gene>